<gene>
    <name type="primary">mmp18</name>
    <name type="synonym">col4</name>
</gene>
<comment type="function">
    <text>Cleaves collagen type I. May play a role in larval tissue degeneration and adult organogenesis during amphibian metamorphosis. May be involved in tail resorption.</text>
</comment>
<comment type="cofactor">
    <cofactor evidence="1">
        <name>Zn(2+)</name>
        <dbReference type="ChEBI" id="CHEBI:29105"/>
    </cofactor>
    <text evidence="1">Binds 1 zinc ion per subunit.</text>
</comment>
<comment type="cofactor">
    <cofactor evidence="1">
        <name>Ca(2+)</name>
        <dbReference type="ChEBI" id="CHEBI:29108"/>
    </cofactor>
</comment>
<comment type="activity regulation">
    <text>Up-regulated in the tail by thyroid hormone.</text>
</comment>
<comment type="subcellular location">
    <subcellularLocation>
        <location evidence="1">Secreted</location>
        <location evidence="1">Extracellular space</location>
        <location evidence="1">Extracellular matrix</location>
    </subcellularLocation>
</comment>
<comment type="tissue specificity">
    <text>Expressed only transiently in whole animal, at time when tadpole feeding begins.</text>
</comment>
<comment type="developmental stage">
    <text>Expressed at high level as the tadpole tail resorbs and during hindlimb morphogenesis and intestinal remodeling.</text>
</comment>
<comment type="domain">
    <text>The conserved cysteine present in the cysteine-switch motif binds the catalytic zinc ion, thus inhibiting the enzyme. The dissociation of the cysteine from the zinc ion upon the activation-peptide release activates the enzyme.</text>
</comment>
<comment type="similarity">
    <text evidence="4">Belongs to the peptidase M10A family.</text>
</comment>
<organism>
    <name type="scientific">Xenopus laevis</name>
    <name type="common">African clawed frog</name>
    <dbReference type="NCBI Taxonomy" id="8355"/>
    <lineage>
        <taxon>Eukaryota</taxon>
        <taxon>Metazoa</taxon>
        <taxon>Chordata</taxon>
        <taxon>Craniata</taxon>
        <taxon>Vertebrata</taxon>
        <taxon>Euteleostomi</taxon>
        <taxon>Amphibia</taxon>
        <taxon>Batrachia</taxon>
        <taxon>Anura</taxon>
        <taxon>Pipoidea</taxon>
        <taxon>Pipidae</taxon>
        <taxon>Xenopodinae</taxon>
        <taxon>Xenopus</taxon>
        <taxon>Xenopus</taxon>
    </lineage>
</organism>
<evidence type="ECO:0000250" key="1"/>
<evidence type="ECO:0000255" key="2"/>
<evidence type="ECO:0000255" key="3">
    <source>
        <dbReference type="PROSITE-ProRule" id="PRU10095"/>
    </source>
</evidence>
<evidence type="ECO:0000305" key="4"/>
<name>MMP18_XENLA</name>
<dbReference type="EC" id="3.4.24.-"/>
<dbReference type="EMBL" id="L76275">
    <property type="protein sequence ID" value="AAB53148.1"/>
    <property type="molecule type" value="Genomic_DNA"/>
</dbReference>
<dbReference type="SMR" id="O13065"/>
<dbReference type="MEROPS" id="M10.018"/>
<dbReference type="AGR" id="Xenbase:XB-GENE-856365"/>
<dbReference type="Xenbase" id="XB-GENE-856365">
    <property type="gene designation" value="mmp1.S"/>
</dbReference>
<dbReference type="Proteomes" id="UP000186698">
    <property type="component" value="Unplaced"/>
</dbReference>
<dbReference type="GO" id="GO:0031012">
    <property type="term" value="C:extracellular matrix"/>
    <property type="evidence" value="ECO:0007669"/>
    <property type="project" value="InterPro"/>
</dbReference>
<dbReference type="GO" id="GO:0005576">
    <property type="term" value="C:extracellular region"/>
    <property type="evidence" value="ECO:0007669"/>
    <property type="project" value="UniProtKB-KW"/>
</dbReference>
<dbReference type="GO" id="GO:0004222">
    <property type="term" value="F:metalloendopeptidase activity"/>
    <property type="evidence" value="ECO:0000318"/>
    <property type="project" value="GO_Central"/>
</dbReference>
<dbReference type="GO" id="GO:0008270">
    <property type="term" value="F:zinc ion binding"/>
    <property type="evidence" value="ECO:0007669"/>
    <property type="project" value="InterPro"/>
</dbReference>
<dbReference type="GO" id="GO:0030574">
    <property type="term" value="P:collagen catabolic process"/>
    <property type="evidence" value="ECO:0000318"/>
    <property type="project" value="GO_Central"/>
</dbReference>
<dbReference type="GO" id="GO:0030198">
    <property type="term" value="P:extracellular matrix organization"/>
    <property type="evidence" value="ECO:0000318"/>
    <property type="project" value="GO_Central"/>
</dbReference>
<dbReference type="GO" id="GO:0006508">
    <property type="term" value="P:proteolysis"/>
    <property type="evidence" value="ECO:0007669"/>
    <property type="project" value="UniProtKB-KW"/>
</dbReference>
<dbReference type="CDD" id="cd00094">
    <property type="entry name" value="HX"/>
    <property type="match status" value="1"/>
</dbReference>
<dbReference type="CDD" id="cd04278">
    <property type="entry name" value="ZnMc_MMP"/>
    <property type="match status" value="1"/>
</dbReference>
<dbReference type="FunFam" id="3.40.390.10:FF:000007">
    <property type="entry name" value="Collagenase 3"/>
    <property type="match status" value="1"/>
</dbReference>
<dbReference type="FunFam" id="2.110.10.10:FF:000002">
    <property type="entry name" value="Matrix metallopeptidase 3"/>
    <property type="match status" value="1"/>
</dbReference>
<dbReference type="Gene3D" id="3.40.390.10">
    <property type="entry name" value="Collagenase (Catalytic Domain)"/>
    <property type="match status" value="1"/>
</dbReference>
<dbReference type="Gene3D" id="2.110.10.10">
    <property type="entry name" value="Hemopexin-like domain"/>
    <property type="match status" value="1"/>
</dbReference>
<dbReference type="InterPro" id="IPR000585">
    <property type="entry name" value="Hemopexin-like_dom"/>
</dbReference>
<dbReference type="InterPro" id="IPR036375">
    <property type="entry name" value="Hemopexin-like_dom_sf"/>
</dbReference>
<dbReference type="InterPro" id="IPR018487">
    <property type="entry name" value="Hemopexin-like_repeat"/>
</dbReference>
<dbReference type="InterPro" id="IPR033739">
    <property type="entry name" value="M10A_MMP"/>
</dbReference>
<dbReference type="InterPro" id="IPR024079">
    <property type="entry name" value="MetalloPept_cat_dom_sf"/>
</dbReference>
<dbReference type="InterPro" id="IPR001818">
    <property type="entry name" value="Pept_M10_metallopeptidase"/>
</dbReference>
<dbReference type="InterPro" id="IPR021190">
    <property type="entry name" value="Pept_M10A"/>
</dbReference>
<dbReference type="InterPro" id="IPR006026">
    <property type="entry name" value="Peptidase_Metallo"/>
</dbReference>
<dbReference type="InterPro" id="IPR002477">
    <property type="entry name" value="Peptidoglycan-bd-like"/>
</dbReference>
<dbReference type="InterPro" id="IPR036365">
    <property type="entry name" value="PGBD-like_sf"/>
</dbReference>
<dbReference type="PANTHER" id="PTHR10201:SF151">
    <property type="entry name" value="INTERSTITIAL COLLAGENASE"/>
    <property type="match status" value="1"/>
</dbReference>
<dbReference type="PANTHER" id="PTHR10201">
    <property type="entry name" value="MATRIX METALLOPROTEINASE"/>
    <property type="match status" value="1"/>
</dbReference>
<dbReference type="Pfam" id="PF00045">
    <property type="entry name" value="Hemopexin"/>
    <property type="match status" value="3"/>
</dbReference>
<dbReference type="Pfam" id="PF00413">
    <property type="entry name" value="Peptidase_M10"/>
    <property type="match status" value="1"/>
</dbReference>
<dbReference type="Pfam" id="PF01471">
    <property type="entry name" value="PG_binding_1"/>
    <property type="match status" value="1"/>
</dbReference>
<dbReference type="PIRSF" id="PIRSF001191">
    <property type="entry name" value="Peptidase_M10A_matrix"/>
    <property type="match status" value="1"/>
</dbReference>
<dbReference type="PRINTS" id="PR00138">
    <property type="entry name" value="MATRIXIN"/>
</dbReference>
<dbReference type="SMART" id="SM00120">
    <property type="entry name" value="HX"/>
    <property type="match status" value="4"/>
</dbReference>
<dbReference type="SMART" id="SM00235">
    <property type="entry name" value="ZnMc"/>
    <property type="match status" value="1"/>
</dbReference>
<dbReference type="SUPFAM" id="SSF50923">
    <property type="entry name" value="Hemopexin-like domain"/>
    <property type="match status" value="1"/>
</dbReference>
<dbReference type="SUPFAM" id="SSF55486">
    <property type="entry name" value="Metalloproteases ('zincins'), catalytic domain"/>
    <property type="match status" value="1"/>
</dbReference>
<dbReference type="SUPFAM" id="SSF47090">
    <property type="entry name" value="PGBD-like"/>
    <property type="match status" value="1"/>
</dbReference>
<dbReference type="PROSITE" id="PS51642">
    <property type="entry name" value="HEMOPEXIN_2"/>
    <property type="match status" value="4"/>
</dbReference>
<dbReference type="PROSITE" id="PS00142">
    <property type="entry name" value="ZINC_PROTEASE"/>
    <property type="match status" value="1"/>
</dbReference>
<proteinExistence type="evidence at transcript level"/>
<sequence length="467" mass="52813">MNSLLLKLLLCVAITAAFPADKQDEPPATKEEMAENYLKRFYSLGTDGGPVGRKKHIQPFTEKLEQMQKFFGLKVTGTLDPKTVEVMEKPRCGVYDVGQYSTVAKSSAWQKKDLTYRILNFTPDLPQADVETAIQRAFKVWSDVTPLTFTRIYNEVSDIEISFTAGDHKDNSPFDGSGGILAHAFQPGNGIGGDAHFDEDETWTKTSEIYNLFLVAAHEFGHSLGLSHSTDQGALMYPTYSNTDPKTFQLPQDDINAIQYLYGKSSNPVQPTGPSTPSRCDPNVVFNAVTTMRGELIFFVKRFLWRKHPQASEAELMFVQAFWPSLPTNIDAAYENPITEQILVFKGSKYTALDGFDVVQGYPRNIYSLGFPKTVKRIDAAVHIEQLGKTYFFAAKKYWSYDEDKKQMDKGFPKQISNDFPGIPDKIDAAFYYRGRLYFFIGRSQFEYNINSKRIVQVLRSNSWLGC</sequence>
<feature type="signal peptide" evidence="2">
    <location>
        <begin position="1"/>
        <end position="17"/>
    </location>
</feature>
<feature type="propeptide" id="PRO_0000028824" evidence="1">
    <location>
        <begin position="18"/>
        <end position="99"/>
    </location>
</feature>
<feature type="chain" id="PRO_0000028825" description="Matrix metalloproteinase-18">
    <location>
        <begin position="100"/>
        <end position="467"/>
    </location>
</feature>
<feature type="repeat" description="Hemopexin 1">
    <location>
        <begin position="277"/>
        <end position="326"/>
    </location>
</feature>
<feature type="repeat" description="Hemopexin 2">
    <location>
        <begin position="327"/>
        <end position="373"/>
    </location>
</feature>
<feature type="repeat" description="Hemopexin 3">
    <location>
        <begin position="375"/>
        <end position="423"/>
    </location>
</feature>
<feature type="repeat" description="Hemopexin 4">
    <location>
        <begin position="424"/>
        <end position="467"/>
    </location>
</feature>
<feature type="short sequence motif" description="Cysteine switch" evidence="1">
    <location>
        <begin position="90"/>
        <end position="97"/>
    </location>
</feature>
<feature type="active site" evidence="3">
    <location>
        <position position="219"/>
    </location>
</feature>
<feature type="binding site" description="in inhibited form" evidence="1">
    <location>
        <position position="92"/>
    </location>
    <ligand>
        <name>Zn(2+)</name>
        <dbReference type="ChEBI" id="CHEBI:29105"/>
        <note>catalytic</note>
    </ligand>
</feature>
<feature type="binding site" evidence="3">
    <location>
        <position position="218"/>
    </location>
    <ligand>
        <name>Zn(2+)</name>
        <dbReference type="ChEBI" id="CHEBI:29105"/>
        <note>catalytic</note>
    </ligand>
</feature>
<feature type="binding site" evidence="3">
    <location>
        <position position="222"/>
    </location>
    <ligand>
        <name>Zn(2+)</name>
        <dbReference type="ChEBI" id="CHEBI:29105"/>
        <note>catalytic</note>
    </ligand>
</feature>
<feature type="binding site" evidence="3">
    <location>
        <position position="228"/>
    </location>
    <ligand>
        <name>Zn(2+)</name>
        <dbReference type="ChEBI" id="CHEBI:29105"/>
        <note>catalytic</note>
    </ligand>
</feature>
<feature type="disulfide bond" evidence="2">
    <location>
        <begin position="280"/>
        <end position="467"/>
    </location>
</feature>
<accession>O13065</accession>
<protein>
    <recommendedName>
        <fullName>Matrix metalloproteinase-18</fullName>
        <shortName>MMP-18</shortName>
        <ecNumber>3.4.24.-</ecNumber>
    </recommendedName>
    <alternativeName>
        <fullName>Collagenase-4</fullName>
        <shortName>xCol4</shortName>
    </alternativeName>
</protein>
<keyword id="KW-0106">Calcium</keyword>
<keyword id="KW-0177">Collagen degradation</keyword>
<keyword id="KW-1015">Disulfide bond</keyword>
<keyword id="KW-0272">Extracellular matrix</keyword>
<keyword id="KW-0378">Hydrolase</keyword>
<keyword id="KW-0479">Metal-binding</keyword>
<keyword id="KW-0482">Metalloprotease</keyword>
<keyword id="KW-0645">Protease</keyword>
<keyword id="KW-1185">Reference proteome</keyword>
<keyword id="KW-0677">Repeat</keyword>
<keyword id="KW-0964">Secreted</keyword>
<keyword id="KW-0732">Signal</keyword>
<keyword id="KW-0862">Zinc</keyword>
<keyword id="KW-0865">Zymogen</keyword>
<reference key="1">
    <citation type="journal article" date="1996" name="Mol. Biol. Cell">
        <title>Identification and characterization of a novel collagenase in Xenopus laevis: possible roles during frog development.</title>
        <authorList>
            <person name="Stolow M.A."/>
            <person name="Bauzon D.D."/>
            <person name="Li J."/>
            <person name="Sedgwick T."/>
            <person name="Liang V.C.-T."/>
            <person name="Sang Q.A."/>
            <person name="Shi Y.-B."/>
        </authorList>
    </citation>
    <scope>NUCLEOTIDE SEQUENCE [GENOMIC DNA]</scope>
    <source>
        <tissue>Intestine</tissue>
    </source>
</reference>